<evidence type="ECO:0000250" key="1"/>
<evidence type="ECO:0000256" key="2">
    <source>
        <dbReference type="SAM" id="MobiDB-lite"/>
    </source>
</evidence>
<evidence type="ECO:0000305" key="3"/>
<gene>
    <name type="primary">ASF1</name>
    <name type="ordered locus">ECU07_0130</name>
</gene>
<proteinExistence type="inferred from homology"/>
<protein>
    <recommendedName>
        <fullName>Histone chaperone ASF1</fullName>
    </recommendedName>
    <alternativeName>
        <fullName>Anti-silencing function protein 1</fullName>
    </alternativeName>
</protein>
<comment type="function">
    <text evidence="1">Histone chaperone that facilitates histone deposition and histone exchange and removal during nucleosome assembly and disassembly.</text>
</comment>
<comment type="subunit">
    <text evidence="1">Interacts with histone H3 and histone H4.</text>
</comment>
<comment type="subcellular location">
    <subcellularLocation>
        <location evidence="1">Nucleus</location>
    </subcellularLocation>
</comment>
<comment type="similarity">
    <text evidence="3">Belongs to the ASF1 family.</text>
</comment>
<sequence>MGHLKLKSIEVDSTVKKLGDPLKFNLRFVCFEEIKCGVEFVVLYNMDVHSDENDQVLAEIEVAPIPKGKIEFSIDADAPDVNKIPLDEMFGLTSILIVGRYKGQQFIRIGYIVDVGYPGIPSTKLMKSDVEEPSEEIGDKEEEDEEDVEEELGSEEGSEESSCIVEDKDEDNEEAEPRTFMEAVEDVGNEGKERLFESEGREEEEDEKVGSDSYSEVNRELNKSVGEEAEGSDGGEDVVDYCGFRIDKKQIEMKLMDPPVINLFEIEWEEESPSEEVPRNNNESPAKKQKVE</sequence>
<feature type="chain" id="PRO_0000284036" description="Histone chaperone ASF1">
    <location>
        <begin position="1"/>
        <end position="292"/>
    </location>
</feature>
<feature type="region of interest" description="Disordered" evidence="2">
    <location>
        <begin position="123"/>
        <end position="239"/>
    </location>
</feature>
<feature type="region of interest" description="Disordered" evidence="2">
    <location>
        <begin position="267"/>
        <end position="292"/>
    </location>
</feature>
<feature type="compositionally biased region" description="Acidic residues" evidence="2">
    <location>
        <begin position="131"/>
        <end position="159"/>
    </location>
</feature>
<feature type="compositionally biased region" description="Basic and acidic residues" evidence="2">
    <location>
        <begin position="189"/>
        <end position="199"/>
    </location>
</feature>
<feature type="compositionally biased region" description="Basic and acidic residues" evidence="2">
    <location>
        <begin position="217"/>
        <end position="226"/>
    </location>
</feature>
<feature type="compositionally biased region" description="Acidic residues" evidence="2">
    <location>
        <begin position="227"/>
        <end position="239"/>
    </location>
</feature>
<accession>Q8SRM1</accession>
<keyword id="KW-0143">Chaperone</keyword>
<keyword id="KW-0156">Chromatin regulator</keyword>
<keyword id="KW-0539">Nucleus</keyword>
<keyword id="KW-1185">Reference proteome</keyword>
<keyword id="KW-0804">Transcription</keyword>
<keyword id="KW-0805">Transcription regulation</keyword>
<name>ASF1_ENCCU</name>
<dbReference type="EMBL" id="AL590447">
    <property type="protein sequence ID" value="CAD25545.1"/>
    <property type="molecule type" value="Genomic_DNA"/>
</dbReference>
<dbReference type="RefSeq" id="NP_585941.1">
    <property type="nucleotide sequence ID" value="NM_001041563.1"/>
</dbReference>
<dbReference type="SMR" id="Q8SRM1"/>
<dbReference type="STRING" id="284813.Q8SRM1"/>
<dbReference type="GeneID" id="859369"/>
<dbReference type="KEGG" id="ecu:ECU07_0130"/>
<dbReference type="VEuPathDB" id="MicrosporidiaDB:ECU07_0130"/>
<dbReference type="HOGENOM" id="CLU_083062_0_0_1"/>
<dbReference type="InParanoid" id="Q8SRM1"/>
<dbReference type="OMA" id="CAEPVDI"/>
<dbReference type="OrthoDB" id="29755at2759"/>
<dbReference type="Proteomes" id="UP000000819">
    <property type="component" value="Chromosome VII"/>
</dbReference>
<dbReference type="GO" id="GO:0000785">
    <property type="term" value="C:chromatin"/>
    <property type="evidence" value="ECO:0007669"/>
    <property type="project" value="TreeGrafter"/>
</dbReference>
<dbReference type="GO" id="GO:0005634">
    <property type="term" value="C:nucleus"/>
    <property type="evidence" value="ECO:0007669"/>
    <property type="project" value="UniProtKB-SubCell"/>
</dbReference>
<dbReference type="GO" id="GO:0042393">
    <property type="term" value="F:histone binding"/>
    <property type="evidence" value="ECO:0007669"/>
    <property type="project" value="InterPro"/>
</dbReference>
<dbReference type="GO" id="GO:0006335">
    <property type="term" value="P:DNA replication-dependent chromatin assembly"/>
    <property type="evidence" value="ECO:0007669"/>
    <property type="project" value="TreeGrafter"/>
</dbReference>
<dbReference type="GO" id="GO:0006334">
    <property type="term" value="P:nucleosome assembly"/>
    <property type="evidence" value="ECO:0007669"/>
    <property type="project" value="InterPro"/>
</dbReference>
<dbReference type="GO" id="GO:0006337">
    <property type="term" value="P:nucleosome disassembly"/>
    <property type="evidence" value="ECO:0007669"/>
    <property type="project" value="InterPro"/>
</dbReference>
<dbReference type="Gene3D" id="2.60.40.1490">
    <property type="entry name" value="Histone chaperone ASF1-like"/>
    <property type="match status" value="1"/>
</dbReference>
<dbReference type="InterPro" id="IPR006818">
    <property type="entry name" value="ASF1-like"/>
</dbReference>
<dbReference type="InterPro" id="IPR036747">
    <property type="entry name" value="ASF1-like_sf"/>
</dbReference>
<dbReference type="InterPro" id="IPR017282">
    <property type="entry name" value="Hist_deposition_Asf1"/>
</dbReference>
<dbReference type="PANTHER" id="PTHR12040">
    <property type="entry name" value="ANTI-SILENCING PROTEIN 1"/>
    <property type="match status" value="1"/>
</dbReference>
<dbReference type="PANTHER" id="PTHR12040:SF0">
    <property type="entry name" value="HISTONE CHAPERONE ASF1"/>
    <property type="match status" value="1"/>
</dbReference>
<dbReference type="Pfam" id="PF04729">
    <property type="entry name" value="ASF1_hist_chap"/>
    <property type="match status" value="1"/>
</dbReference>
<dbReference type="PIRSF" id="PIRSF037759">
    <property type="entry name" value="Histone_Asf1"/>
    <property type="match status" value="1"/>
</dbReference>
<dbReference type="SUPFAM" id="SSF101546">
    <property type="entry name" value="ASF1-like"/>
    <property type="match status" value="1"/>
</dbReference>
<reference key="1">
    <citation type="journal article" date="2001" name="Nature">
        <title>Genome sequence and gene compaction of the eukaryote parasite Encephalitozoon cuniculi.</title>
        <authorList>
            <person name="Katinka M.D."/>
            <person name="Duprat S."/>
            <person name="Cornillot E."/>
            <person name="Metenier G."/>
            <person name="Thomarat F."/>
            <person name="Prensier G."/>
            <person name="Barbe V."/>
            <person name="Peyretaillade E."/>
            <person name="Brottier P."/>
            <person name="Wincker P."/>
            <person name="Delbac F."/>
            <person name="El Alaoui H."/>
            <person name="Peyret P."/>
            <person name="Saurin W."/>
            <person name="Gouy M."/>
            <person name="Weissenbach J."/>
            <person name="Vivares C.P."/>
        </authorList>
    </citation>
    <scope>NUCLEOTIDE SEQUENCE [LARGE SCALE GENOMIC DNA]</scope>
    <source>
        <strain>GB-M1</strain>
    </source>
</reference>
<organism>
    <name type="scientific">Encephalitozoon cuniculi (strain GB-M1)</name>
    <name type="common">Microsporidian parasite</name>
    <dbReference type="NCBI Taxonomy" id="284813"/>
    <lineage>
        <taxon>Eukaryota</taxon>
        <taxon>Fungi</taxon>
        <taxon>Fungi incertae sedis</taxon>
        <taxon>Microsporidia</taxon>
        <taxon>Unikaryonidae</taxon>
        <taxon>Encephalitozoon</taxon>
    </lineage>
</organism>